<evidence type="ECO:0000255" key="1">
    <source>
        <dbReference type="HAMAP-Rule" id="MF_02004"/>
    </source>
</evidence>
<accession>Q5F5W0</accession>
<dbReference type="EC" id="6.1.1.9" evidence="1"/>
<dbReference type="EMBL" id="AE004969">
    <property type="protein sequence ID" value="AAW90427.1"/>
    <property type="molecule type" value="Genomic_DNA"/>
</dbReference>
<dbReference type="RefSeq" id="WP_003690041.1">
    <property type="nucleotide sequence ID" value="NC_002946.2"/>
</dbReference>
<dbReference type="RefSeq" id="YP_208839.1">
    <property type="nucleotide sequence ID" value="NC_002946.2"/>
</dbReference>
<dbReference type="SMR" id="Q5F5W0"/>
<dbReference type="STRING" id="242231.NGO_1809"/>
<dbReference type="KEGG" id="ngo:NGO_1809"/>
<dbReference type="PATRIC" id="fig|242231.10.peg.2170"/>
<dbReference type="HOGENOM" id="CLU_001493_0_2_4"/>
<dbReference type="Proteomes" id="UP000000535">
    <property type="component" value="Chromosome"/>
</dbReference>
<dbReference type="GO" id="GO:0005829">
    <property type="term" value="C:cytosol"/>
    <property type="evidence" value="ECO:0007669"/>
    <property type="project" value="TreeGrafter"/>
</dbReference>
<dbReference type="GO" id="GO:0002161">
    <property type="term" value="F:aminoacyl-tRNA deacylase activity"/>
    <property type="evidence" value="ECO:0007669"/>
    <property type="project" value="InterPro"/>
</dbReference>
<dbReference type="GO" id="GO:0005524">
    <property type="term" value="F:ATP binding"/>
    <property type="evidence" value="ECO:0007669"/>
    <property type="project" value="UniProtKB-UniRule"/>
</dbReference>
<dbReference type="GO" id="GO:0004832">
    <property type="term" value="F:valine-tRNA ligase activity"/>
    <property type="evidence" value="ECO:0007669"/>
    <property type="project" value="UniProtKB-UniRule"/>
</dbReference>
<dbReference type="GO" id="GO:0006438">
    <property type="term" value="P:valyl-tRNA aminoacylation"/>
    <property type="evidence" value="ECO:0007669"/>
    <property type="project" value="UniProtKB-UniRule"/>
</dbReference>
<dbReference type="CDD" id="cd07962">
    <property type="entry name" value="Anticodon_Ia_Val"/>
    <property type="match status" value="1"/>
</dbReference>
<dbReference type="CDD" id="cd00817">
    <property type="entry name" value="ValRS_core"/>
    <property type="match status" value="1"/>
</dbReference>
<dbReference type="FunFam" id="1.10.287.380:FF:000001">
    <property type="entry name" value="Valine--tRNA ligase"/>
    <property type="match status" value="1"/>
</dbReference>
<dbReference type="FunFam" id="1.10.730.10:FF:000009">
    <property type="entry name" value="Valine--tRNA ligase, mitochondrial"/>
    <property type="match status" value="1"/>
</dbReference>
<dbReference type="FunFam" id="3.40.50.620:FF:000020">
    <property type="entry name" value="Valine--tRNA ligase, mitochondrial"/>
    <property type="match status" value="1"/>
</dbReference>
<dbReference type="FunFam" id="3.40.50.620:FF:000078">
    <property type="entry name" value="Valine--tRNA ligase, mitochondrial"/>
    <property type="match status" value="1"/>
</dbReference>
<dbReference type="Gene3D" id="3.40.50.620">
    <property type="entry name" value="HUPs"/>
    <property type="match status" value="2"/>
</dbReference>
<dbReference type="Gene3D" id="1.10.730.10">
    <property type="entry name" value="Isoleucyl-tRNA Synthetase, Domain 1"/>
    <property type="match status" value="1"/>
</dbReference>
<dbReference type="Gene3D" id="1.10.287.380">
    <property type="entry name" value="Valyl-tRNA synthetase, C-terminal domain"/>
    <property type="match status" value="1"/>
</dbReference>
<dbReference type="HAMAP" id="MF_02004">
    <property type="entry name" value="Val_tRNA_synth_type1"/>
    <property type="match status" value="1"/>
</dbReference>
<dbReference type="InterPro" id="IPR001412">
    <property type="entry name" value="aa-tRNA-synth_I_CS"/>
</dbReference>
<dbReference type="InterPro" id="IPR002300">
    <property type="entry name" value="aa-tRNA-synth_Ia"/>
</dbReference>
<dbReference type="InterPro" id="IPR033705">
    <property type="entry name" value="Anticodon_Ia_Val"/>
</dbReference>
<dbReference type="InterPro" id="IPR013155">
    <property type="entry name" value="M/V/L/I-tRNA-synth_anticd-bd"/>
</dbReference>
<dbReference type="InterPro" id="IPR014729">
    <property type="entry name" value="Rossmann-like_a/b/a_fold"/>
</dbReference>
<dbReference type="InterPro" id="IPR010978">
    <property type="entry name" value="tRNA-bd_arm"/>
</dbReference>
<dbReference type="InterPro" id="IPR009080">
    <property type="entry name" value="tRNAsynth_Ia_anticodon-bd"/>
</dbReference>
<dbReference type="InterPro" id="IPR037118">
    <property type="entry name" value="Val-tRNA_synth_C_sf"/>
</dbReference>
<dbReference type="InterPro" id="IPR019499">
    <property type="entry name" value="Val-tRNA_synth_tRNA-bd"/>
</dbReference>
<dbReference type="InterPro" id="IPR009008">
    <property type="entry name" value="Val/Leu/Ile-tRNA-synth_edit"/>
</dbReference>
<dbReference type="InterPro" id="IPR002303">
    <property type="entry name" value="Valyl-tRNA_ligase"/>
</dbReference>
<dbReference type="NCBIfam" id="NF004349">
    <property type="entry name" value="PRK05729.1"/>
    <property type="match status" value="1"/>
</dbReference>
<dbReference type="NCBIfam" id="TIGR00422">
    <property type="entry name" value="valS"/>
    <property type="match status" value="1"/>
</dbReference>
<dbReference type="PANTHER" id="PTHR11946:SF93">
    <property type="entry name" value="VALINE--TRNA LIGASE, CHLOROPLASTIC_MITOCHONDRIAL 2"/>
    <property type="match status" value="1"/>
</dbReference>
<dbReference type="PANTHER" id="PTHR11946">
    <property type="entry name" value="VALYL-TRNA SYNTHETASES"/>
    <property type="match status" value="1"/>
</dbReference>
<dbReference type="Pfam" id="PF08264">
    <property type="entry name" value="Anticodon_1"/>
    <property type="match status" value="1"/>
</dbReference>
<dbReference type="Pfam" id="PF00133">
    <property type="entry name" value="tRNA-synt_1"/>
    <property type="match status" value="1"/>
</dbReference>
<dbReference type="Pfam" id="PF10458">
    <property type="entry name" value="Val_tRNA-synt_C"/>
    <property type="match status" value="1"/>
</dbReference>
<dbReference type="PRINTS" id="PR00986">
    <property type="entry name" value="TRNASYNTHVAL"/>
</dbReference>
<dbReference type="SUPFAM" id="SSF47323">
    <property type="entry name" value="Anticodon-binding domain of a subclass of class I aminoacyl-tRNA synthetases"/>
    <property type="match status" value="1"/>
</dbReference>
<dbReference type="SUPFAM" id="SSF52374">
    <property type="entry name" value="Nucleotidylyl transferase"/>
    <property type="match status" value="1"/>
</dbReference>
<dbReference type="SUPFAM" id="SSF46589">
    <property type="entry name" value="tRNA-binding arm"/>
    <property type="match status" value="1"/>
</dbReference>
<dbReference type="SUPFAM" id="SSF50677">
    <property type="entry name" value="ValRS/IleRS/LeuRS editing domain"/>
    <property type="match status" value="1"/>
</dbReference>
<dbReference type="PROSITE" id="PS00178">
    <property type="entry name" value="AA_TRNA_LIGASE_I"/>
    <property type="match status" value="1"/>
</dbReference>
<organism>
    <name type="scientific">Neisseria gonorrhoeae (strain ATCC 700825 / FA 1090)</name>
    <dbReference type="NCBI Taxonomy" id="242231"/>
    <lineage>
        <taxon>Bacteria</taxon>
        <taxon>Pseudomonadati</taxon>
        <taxon>Pseudomonadota</taxon>
        <taxon>Betaproteobacteria</taxon>
        <taxon>Neisseriales</taxon>
        <taxon>Neisseriaceae</taxon>
        <taxon>Neisseria</taxon>
    </lineage>
</organism>
<proteinExistence type="inferred from homology"/>
<name>SYV_NEIG1</name>
<protein>
    <recommendedName>
        <fullName evidence="1">Valine--tRNA ligase</fullName>
        <ecNumber evidence="1">6.1.1.9</ecNumber>
    </recommendedName>
    <alternativeName>
        <fullName evidence="1">Valyl-tRNA synthetase</fullName>
        <shortName evidence="1">ValRS</shortName>
    </alternativeName>
</protein>
<keyword id="KW-0030">Aminoacyl-tRNA synthetase</keyword>
<keyword id="KW-0067">ATP-binding</keyword>
<keyword id="KW-0175">Coiled coil</keyword>
<keyword id="KW-0963">Cytoplasm</keyword>
<keyword id="KW-0436">Ligase</keyword>
<keyword id="KW-0547">Nucleotide-binding</keyword>
<keyword id="KW-0648">Protein biosynthesis</keyword>
<keyword id="KW-1185">Reference proteome</keyword>
<gene>
    <name evidence="1" type="primary">valS</name>
    <name type="ordered locus">NGO_1809</name>
</gene>
<comment type="function">
    <text evidence="1">Catalyzes the attachment of valine to tRNA(Val). As ValRS can inadvertently accommodate and process structurally similar amino acids such as threonine, to avoid such errors, it has a 'posttransfer' editing activity that hydrolyzes mischarged Thr-tRNA(Val) in a tRNA-dependent manner.</text>
</comment>
<comment type="catalytic activity">
    <reaction evidence="1">
        <text>tRNA(Val) + L-valine + ATP = L-valyl-tRNA(Val) + AMP + diphosphate</text>
        <dbReference type="Rhea" id="RHEA:10704"/>
        <dbReference type="Rhea" id="RHEA-COMP:9672"/>
        <dbReference type="Rhea" id="RHEA-COMP:9708"/>
        <dbReference type="ChEBI" id="CHEBI:30616"/>
        <dbReference type="ChEBI" id="CHEBI:33019"/>
        <dbReference type="ChEBI" id="CHEBI:57762"/>
        <dbReference type="ChEBI" id="CHEBI:78442"/>
        <dbReference type="ChEBI" id="CHEBI:78537"/>
        <dbReference type="ChEBI" id="CHEBI:456215"/>
        <dbReference type="EC" id="6.1.1.9"/>
    </reaction>
</comment>
<comment type="subunit">
    <text evidence="1">Monomer.</text>
</comment>
<comment type="subcellular location">
    <subcellularLocation>
        <location evidence="1">Cytoplasm</location>
    </subcellularLocation>
</comment>
<comment type="domain">
    <text evidence="1">ValRS has two distinct active sites: one for aminoacylation and one for editing. The misactivated threonine is translocated from the active site to the editing site.</text>
</comment>
<comment type="domain">
    <text evidence="1">The C-terminal coiled-coil domain is crucial for aminoacylation activity.</text>
</comment>
<comment type="similarity">
    <text evidence="1">Belongs to the class-I aminoacyl-tRNA synthetase family. ValS type 1 subfamily.</text>
</comment>
<sequence length="945" mass="106333">MLDKYSPAEIESKHYQNWESQGYFRPDMDLTKPSFSIQLPPPNVTGTLHMGHAFNQTIMDGLTRYYRMKGCNTAWIPGTDHAGIATQIVVERQLAAQNVSRHDLGREKFLEKVWEWKEVSGGTITQQMRRVGCSADWTREYFTMDGVRAETVTEVFVRLYEQGLIYRGKRLVNWDPVLGTAVSDLEVESMEEQGSMWHIRYPLADNPTEAVIVATTRPETLLGDAAVAVNPEDERYTHLIGKELILPLTGRTIPVIADEYVEKDFGTGCVKITPAHDFNDYEVGKRHDTRLINVFDLEAKVLANAEVFNFKGEAQPGFSLPEKYAGLDRFAARKQMVADLQEQGFLVEIKPHTLMTPKGDRTGSVIEPMLTSQWFVAMSATPNGGEPDNEFKGLSLADKAKKAVDSGAVRFIPENWVNTYNQWMNNIQDWCISRQLWWGHQIPAWYDEAGNVYVARNQAEAEKQAGKTGLTREEDVLDTWFSSALVPFSTLGWPSETDELKAFLPSNVLVTGYEIIFFWVARMIMMTTHFTGKVPFKAVYIHGIVRDHEGKKMSKSEGNVIDPVDLIDGIGLDKLLMKRTTGLRKPETAPKVEEATKKLFPEGIPSMGADALRFTMASYASLGRSVNFDFKRAEGYRNFCNKIWNATNFVLMNTENQDCGYGATAAEPRGHSFPDMWIIGRLNQTIEQVTQAYETYRFDLAAETLYSFVWNDYCDWYLELAKVQLQTGCASRQRATRHTLLRVLEAALRLLHPIIPFITEELWQTVAPMCDAKTADSIMLARFPETDGGEIVQTAFGQMTVLQDLIGAVRNLRGETGIQPNVKAPLFVESADDLADYLKYLPMMTRLTEARQVAALPESGDAPVAVCNGARLMLKVEIDKAAETARLSKEAEKLQKALDKLNAKLSKPGYTEKAPAHLVEKDKADLAELEDKMAKVQNQLAKLKD</sequence>
<reference key="1">
    <citation type="submission" date="2003-03" db="EMBL/GenBank/DDBJ databases">
        <title>The complete genome sequence of Neisseria gonorrhoeae.</title>
        <authorList>
            <person name="Lewis L.A."/>
            <person name="Gillaspy A.F."/>
            <person name="McLaughlin R.E."/>
            <person name="Gipson M."/>
            <person name="Ducey T.F."/>
            <person name="Ownbey T."/>
            <person name="Hartman K."/>
            <person name="Nydick C."/>
            <person name="Carson M.B."/>
            <person name="Vaughn J."/>
            <person name="Thomson C."/>
            <person name="Song L."/>
            <person name="Lin S."/>
            <person name="Yuan X."/>
            <person name="Najar F."/>
            <person name="Zhan M."/>
            <person name="Ren Q."/>
            <person name="Zhu H."/>
            <person name="Qi S."/>
            <person name="Kenton S.M."/>
            <person name="Lai H."/>
            <person name="White J.D."/>
            <person name="Clifton S."/>
            <person name="Roe B.A."/>
            <person name="Dyer D.W."/>
        </authorList>
    </citation>
    <scope>NUCLEOTIDE SEQUENCE [LARGE SCALE GENOMIC DNA]</scope>
    <source>
        <strain>ATCC 700825 / FA 1090</strain>
    </source>
</reference>
<feature type="chain" id="PRO_0000224516" description="Valine--tRNA ligase">
    <location>
        <begin position="1"/>
        <end position="945"/>
    </location>
</feature>
<feature type="coiled-coil region" evidence="1">
    <location>
        <begin position="879"/>
        <end position="945"/>
    </location>
</feature>
<feature type="short sequence motif" description="'HIGH' region">
    <location>
        <begin position="42"/>
        <end position="52"/>
    </location>
</feature>
<feature type="short sequence motif" description="'KMSKS' region">
    <location>
        <begin position="552"/>
        <end position="556"/>
    </location>
</feature>
<feature type="binding site" evidence="1">
    <location>
        <position position="555"/>
    </location>
    <ligand>
        <name>ATP</name>
        <dbReference type="ChEBI" id="CHEBI:30616"/>
    </ligand>
</feature>